<accession>Q4VNZ9</accession>
<accession>F4IU82</accession>
<accession>F4IU83</accession>
<proteinExistence type="inferred from homology"/>
<comment type="subcellular location">
    <subcellularLocation>
        <location evidence="1">Secreted</location>
    </subcellularLocation>
</comment>
<comment type="alternative products">
    <event type="alternative splicing"/>
    <isoform>
        <id>Q4VNZ9-1</id>
        <name>1</name>
        <sequence type="displayed"/>
    </isoform>
    <text>A number of isoforms are produced. According to EST sequences.</text>
</comment>
<comment type="similarity">
    <text evidence="3">Belongs to the DEFL family.</text>
</comment>
<comment type="sequence caution" evidence="3">
    <conflict type="frameshift">
        <sequence resource="EMBL" id="AC007167"/>
    </conflict>
</comment>
<comment type="sequence caution" evidence="3">
    <conflict type="erroneous gene model prediction">
        <sequence resource="EMBL-CDS" id="AEC05772"/>
    </conflict>
</comment>
<comment type="sequence caution" evidence="3">
    <conflict type="frameshift">
        <sequence resource="EMBL-CDS" id="AEC05772"/>
    </conflict>
</comment>
<comment type="sequence caution" evidence="3">
    <conflict type="erroneous gene model prediction">
        <sequence resource="EMBL-CDS" id="AEC05773"/>
    </conflict>
</comment>
<comment type="sequence caution" evidence="3">
    <conflict type="frameshift">
        <sequence resource="EMBL-CDS" id="AEC05773"/>
    </conflict>
</comment>
<dbReference type="EMBL" id="AC007167">
    <property type="status" value="NOT_ANNOTATED_CDS"/>
    <property type="molecule type" value="Genomic_DNA"/>
</dbReference>
<dbReference type="EMBL" id="CP002685">
    <property type="protein sequence ID" value="AEC05772.1"/>
    <property type="status" value="ALT_SEQ"/>
    <property type="molecule type" value="Genomic_DNA"/>
</dbReference>
<dbReference type="EMBL" id="CP002685">
    <property type="protein sequence ID" value="AEC05773.1"/>
    <property type="status" value="ALT_SEQ"/>
    <property type="molecule type" value="Genomic_DNA"/>
</dbReference>
<dbReference type="EMBL" id="AY803263">
    <property type="protein sequence ID" value="AAX39304.1"/>
    <property type="molecule type" value="mRNA"/>
</dbReference>
<dbReference type="RefSeq" id="NP_001031312.1">
    <property type="nucleotide sequence ID" value="NM_001036235.1"/>
</dbReference>
<dbReference type="RefSeq" id="NP_001031313.1">
    <property type="nucleotide sequence ID" value="NM_001036236.2"/>
</dbReference>
<dbReference type="SMR" id="Q4VNZ9"/>
<dbReference type="STRING" id="3702.Q4VNZ9"/>
<dbReference type="PaxDb" id="3702-AT2G03937.2"/>
<dbReference type="GeneID" id="3768675"/>
<dbReference type="KEGG" id="ath:AT2G03937"/>
<dbReference type="Araport" id="AT2G03937"/>
<dbReference type="TAIR" id="AT2G03937"/>
<dbReference type="InParanoid" id="Q4VNZ9"/>
<dbReference type="PhylomeDB" id="Q4VNZ9"/>
<dbReference type="PRO" id="PR:Q4VNZ9"/>
<dbReference type="Proteomes" id="UP000006548">
    <property type="component" value="Chromosome 2"/>
</dbReference>
<dbReference type="ExpressionAtlas" id="Q4VNZ9">
    <property type="expression patterns" value="baseline"/>
</dbReference>
<dbReference type="GO" id="GO:0005576">
    <property type="term" value="C:extracellular region"/>
    <property type="evidence" value="ECO:0007669"/>
    <property type="project" value="UniProtKB-SubCell"/>
</dbReference>
<dbReference type="GO" id="GO:0050832">
    <property type="term" value="P:defense response to fungus"/>
    <property type="evidence" value="ECO:0007669"/>
    <property type="project" value="UniProtKB-KW"/>
</dbReference>
<dbReference type="GO" id="GO:0031640">
    <property type="term" value="P:killing of cells of another organism"/>
    <property type="evidence" value="ECO:0007669"/>
    <property type="project" value="UniProtKB-KW"/>
</dbReference>
<dbReference type="InterPro" id="IPR056373">
    <property type="entry name" value="Defensin-like_dom"/>
</dbReference>
<dbReference type="Pfam" id="PF24552">
    <property type="entry name" value="Defensin"/>
    <property type="match status" value="1"/>
</dbReference>
<keyword id="KW-0025">Alternative splicing</keyword>
<keyword id="KW-0929">Antimicrobial</keyword>
<keyword id="KW-1015">Disulfide bond</keyword>
<keyword id="KW-0295">Fungicide</keyword>
<keyword id="KW-0611">Plant defense</keyword>
<keyword id="KW-1185">Reference proteome</keyword>
<keyword id="KW-0964">Secreted</keyword>
<keyword id="KW-0732">Signal</keyword>
<feature type="signal peptide" evidence="2">
    <location>
        <begin position="1"/>
        <end position="23"/>
    </location>
</feature>
<feature type="chain" id="PRO_0000379638" description="Defensin-like protein 58">
    <location>
        <begin position="24"/>
        <end position="75"/>
    </location>
</feature>
<feature type="disulfide bond" evidence="1">
    <location>
        <begin position="39"/>
        <end position="73"/>
    </location>
</feature>
<feature type="disulfide bond" evidence="1">
    <location>
        <begin position="43"/>
        <end position="66"/>
    </location>
</feature>
<feature type="disulfide bond" evidence="1">
    <location>
        <begin position="52"/>
        <end position="71"/>
    </location>
</feature>
<feature type="disulfide bond" evidence="1">
    <location>
        <begin position="56"/>
        <end position="72"/>
    </location>
</feature>
<name>DEF58_ARATH</name>
<reference key="1">
    <citation type="journal article" date="1999" name="Nature">
        <title>Sequence and analysis of chromosome 2 of the plant Arabidopsis thaliana.</title>
        <authorList>
            <person name="Lin X."/>
            <person name="Kaul S."/>
            <person name="Rounsley S.D."/>
            <person name="Shea T.P."/>
            <person name="Benito M.-I."/>
            <person name="Town C.D."/>
            <person name="Fujii C.Y."/>
            <person name="Mason T.M."/>
            <person name="Bowman C.L."/>
            <person name="Barnstead M.E."/>
            <person name="Feldblyum T.V."/>
            <person name="Buell C.R."/>
            <person name="Ketchum K.A."/>
            <person name="Lee J.J."/>
            <person name="Ronning C.M."/>
            <person name="Koo H.L."/>
            <person name="Moffat K.S."/>
            <person name="Cronin L.A."/>
            <person name="Shen M."/>
            <person name="Pai G."/>
            <person name="Van Aken S."/>
            <person name="Umayam L."/>
            <person name="Tallon L.J."/>
            <person name="Gill J.E."/>
            <person name="Adams M.D."/>
            <person name="Carrera A.J."/>
            <person name="Creasy T.H."/>
            <person name="Goodman H.M."/>
            <person name="Somerville C.R."/>
            <person name="Copenhaver G.P."/>
            <person name="Preuss D."/>
            <person name="Nierman W.C."/>
            <person name="White O."/>
            <person name="Eisen J.A."/>
            <person name="Salzberg S.L."/>
            <person name="Fraser C.M."/>
            <person name="Venter J.C."/>
        </authorList>
    </citation>
    <scope>NUCLEOTIDE SEQUENCE [LARGE SCALE GENOMIC DNA]</scope>
    <source>
        <strain>cv. Columbia</strain>
    </source>
</reference>
<reference key="2">
    <citation type="journal article" date="2017" name="Plant J.">
        <title>Araport11: a complete reannotation of the Arabidopsis thaliana reference genome.</title>
        <authorList>
            <person name="Cheng C.Y."/>
            <person name="Krishnakumar V."/>
            <person name="Chan A.P."/>
            <person name="Thibaud-Nissen F."/>
            <person name="Schobel S."/>
            <person name="Town C.D."/>
        </authorList>
    </citation>
    <scope>GENOME REANNOTATION</scope>
    <source>
        <strain>cv. Columbia</strain>
    </source>
</reference>
<reference key="3">
    <citation type="journal article" date="2005" name="Plant Physiol.">
        <title>Genome organization of more than 300 defensin-like genes in Arabidopsis.</title>
        <authorList>
            <person name="Silverstein K.A.T."/>
            <person name="Graham M.A."/>
            <person name="Paape T.D."/>
            <person name="VandenBosch K.A."/>
        </authorList>
    </citation>
    <scope>NUCLEOTIDE SEQUENCE [MRNA] OF 17-74</scope>
    <scope>GENE FAMILY</scope>
</reference>
<protein>
    <recommendedName>
        <fullName>Defensin-like protein 58</fullName>
    </recommendedName>
</protein>
<evidence type="ECO:0000250" key="1"/>
<evidence type="ECO:0000255" key="2"/>
<evidence type="ECO:0000305" key="3"/>
<gene>
    <name type="ordered locus">At2g03937</name>
    <name type="ORF">F3C11</name>
</gene>
<organism>
    <name type="scientific">Arabidopsis thaliana</name>
    <name type="common">Mouse-ear cress</name>
    <dbReference type="NCBI Taxonomy" id="3702"/>
    <lineage>
        <taxon>Eukaryota</taxon>
        <taxon>Viridiplantae</taxon>
        <taxon>Streptophyta</taxon>
        <taxon>Embryophyta</taxon>
        <taxon>Tracheophyta</taxon>
        <taxon>Spermatophyta</taxon>
        <taxon>Magnoliopsida</taxon>
        <taxon>eudicotyledons</taxon>
        <taxon>Gunneridae</taxon>
        <taxon>Pentapetalae</taxon>
        <taxon>rosids</taxon>
        <taxon>malvids</taxon>
        <taxon>Brassicales</taxon>
        <taxon>Brassicaceae</taxon>
        <taxon>Camelineae</taxon>
        <taxon>Arabidopsis</taxon>
    </lineage>
</organism>
<sequence length="75" mass="8519">MNITKRYVVIFFLVMLTKSLSNSDVLVSSVIETSKNDVCFIPCTRRYGDWECYDDCLGKNFNDGGCVDGRCCCKK</sequence>